<sequence length="233" mass="24566">MKVGIIGAMEEEVTLLRDRIENRQTLARAGCEIYTGQLNGIDVALLKSGIGKVAAAMGTTLLLEHCQPDLVINTGSAGGLASSLKVGDIVVSNEVRYHDADVTAFGYEPGQMAGCPAAFVADEDLIALAENCIQQLKLNAVRGLICSGDAFINGAEPLARIRAAFPTVAAVEMEAAAIGHVCYLFNTPFVVVRAISDVADQASHLSFEEFLVVAAKQSTLMIEAMLTTLAQRG</sequence>
<feature type="chain" id="PRO_0000359398" description="5'-methylthioadenosine/S-adenosylhomocysteine nucleosidase">
    <location>
        <begin position="1"/>
        <end position="233"/>
    </location>
</feature>
<feature type="active site" description="Proton acceptor" evidence="1">
    <location>
        <position position="12"/>
    </location>
</feature>
<feature type="active site" description="Proton donor" evidence="1">
    <location>
        <position position="197"/>
    </location>
</feature>
<feature type="binding site" evidence="1">
    <location>
        <position position="78"/>
    </location>
    <ligand>
        <name>substrate</name>
    </ligand>
</feature>
<feature type="binding site" evidence="1">
    <location>
        <position position="152"/>
    </location>
    <ligand>
        <name>substrate</name>
    </ligand>
</feature>
<feature type="binding site" evidence="1">
    <location>
        <begin position="173"/>
        <end position="174"/>
    </location>
    <ligand>
        <name>substrate</name>
    </ligand>
</feature>
<reference key="1">
    <citation type="journal article" date="2007" name="PLoS Genet.">
        <title>The complete genome sequence of Yersinia pseudotuberculosis IP31758, the causative agent of Far East scarlet-like fever.</title>
        <authorList>
            <person name="Eppinger M."/>
            <person name="Rosovitz M.J."/>
            <person name="Fricke W.F."/>
            <person name="Rasko D.A."/>
            <person name="Kokorina G."/>
            <person name="Fayolle C."/>
            <person name="Lindler L.E."/>
            <person name="Carniel E."/>
            <person name="Ravel J."/>
        </authorList>
    </citation>
    <scope>NUCLEOTIDE SEQUENCE [LARGE SCALE GENOMIC DNA]</scope>
    <source>
        <strain>IP 31758</strain>
    </source>
</reference>
<accession>A7FM04</accession>
<comment type="function">
    <text evidence="1">Catalyzes the irreversible cleavage of the glycosidic bond in both 5'-methylthioadenosine (MTA) and S-adenosylhomocysteine (SAH/AdoHcy) to adenine and the corresponding thioribose, 5'-methylthioribose and S-ribosylhomocysteine, respectively. Also cleaves 5'-deoxyadenosine, a toxic by-product of radical S-adenosylmethionine (SAM) enzymes, into 5-deoxyribose and adenine. Thus, is required for in vivo function of the radical SAM enzymes biotin synthase and lipoic acid synthase, that are inhibited by 5'-deoxyadenosine accumulation.</text>
</comment>
<comment type="catalytic activity">
    <reaction evidence="1">
        <text>S-adenosyl-L-homocysteine + H2O = S-(5-deoxy-D-ribos-5-yl)-L-homocysteine + adenine</text>
        <dbReference type="Rhea" id="RHEA:17805"/>
        <dbReference type="ChEBI" id="CHEBI:15377"/>
        <dbReference type="ChEBI" id="CHEBI:16708"/>
        <dbReference type="ChEBI" id="CHEBI:57856"/>
        <dbReference type="ChEBI" id="CHEBI:58195"/>
        <dbReference type="EC" id="3.2.2.9"/>
    </reaction>
</comment>
<comment type="catalytic activity">
    <reaction evidence="1">
        <text>S-methyl-5'-thioadenosine + H2O = 5-(methylsulfanyl)-D-ribose + adenine</text>
        <dbReference type="Rhea" id="RHEA:13617"/>
        <dbReference type="ChEBI" id="CHEBI:15377"/>
        <dbReference type="ChEBI" id="CHEBI:16708"/>
        <dbReference type="ChEBI" id="CHEBI:17509"/>
        <dbReference type="ChEBI" id="CHEBI:78440"/>
        <dbReference type="EC" id="3.2.2.9"/>
    </reaction>
</comment>
<comment type="catalytic activity">
    <reaction evidence="1">
        <text>5'-deoxyadenosine + H2O = 5-deoxy-D-ribose + adenine</text>
        <dbReference type="Rhea" id="RHEA:29859"/>
        <dbReference type="ChEBI" id="CHEBI:15377"/>
        <dbReference type="ChEBI" id="CHEBI:16708"/>
        <dbReference type="ChEBI" id="CHEBI:17319"/>
        <dbReference type="ChEBI" id="CHEBI:149540"/>
        <dbReference type="EC" id="3.2.2.9"/>
    </reaction>
    <physiologicalReaction direction="left-to-right" evidence="1">
        <dbReference type="Rhea" id="RHEA:29860"/>
    </physiologicalReaction>
</comment>
<comment type="pathway">
    <text evidence="1">Amino-acid biosynthesis; L-methionine biosynthesis via salvage pathway; S-methyl-5-thio-alpha-D-ribose 1-phosphate from S-methyl-5'-thioadenosine (hydrolase route): step 1/2.</text>
</comment>
<comment type="subunit">
    <text evidence="1">Homodimer.</text>
</comment>
<comment type="similarity">
    <text evidence="1">Belongs to the PNP/UDP phosphorylase family. MtnN subfamily.</text>
</comment>
<proteinExistence type="inferred from homology"/>
<name>MTNN_YERP3</name>
<evidence type="ECO:0000255" key="1">
    <source>
        <dbReference type="HAMAP-Rule" id="MF_01684"/>
    </source>
</evidence>
<organism>
    <name type="scientific">Yersinia pseudotuberculosis serotype O:1b (strain IP 31758)</name>
    <dbReference type="NCBI Taxonomy" id="349747"/>
    <lineage>
        <taxon>Bacteria</taxon>
        <taxon>Pseudomonadati</taxon>
        <taxon>Pseudomonadota</taxon>
        <taxon>Gammaproteobacteria</taxon>
        <taxon>Enterobacterales</taxon>
        <taxon>Yersiniaceae</taxon>
        <taxon>Yersinia</taxon>
    </lineage>
</organism>
<dbReference type="EC" id="3.2.2.9" evidence="1"/>
<dbReference type="EMBL" id="CP000720">
    <property type="protein sequence ID" value="ABS48733.1"/>
    <property type="molecule type" value="Genomic_DNA"/>
</dbReference>
<dbReference type="RefSeq" id="WP_011191764.1">
    <property type="nucleotide sequence ID" value="NC_009708.1"/>
</dbReference>
<dbReference type="SMR" id="A7FM04"/>
<dbReference type="GeneID" id="49787248"/>
<dbReference type="KEGG" id="ypi:YpsIP31758_3325"/>
<dbReference type="HOGENOM" id="CLU_031248_2_2_6"/>
<dbReference type="UniPathway" id="UPA00904">
    <property type="reaction ID" value="UER00871"/>
</dbReference>
<dbReference type="Proteomes" id="UP000002412">
    <property type="component" value="Chromosome"/>
</dbReference>
<dbReference type="GO" id="GO:0005829">
    <property type="term" value="C:cytosol"/>
    <property type="evidence" value="ECO:0007669"/>
    <property type="project" value="TreeGrafter"/>
</dbReference>
<dbReference type="GO" id="GO:0008782">
    <property type="term" value="F:adenosylhomocysteine nucleosidase activity"/>
    <property type="evidence" value="ECO:0007669"/>
    <property type="project" value="UniProtKB-UniRule"/>
</dbReference>
<dbReference type="GO" id="GO:0008930">
    <property type="term" value="F:methylthioadenosine nucleosidase activity"/>
    <property type="evidence" value="ECO:0007669"/>
    <property type="project" value="UniProtKB-UniRule"/>
</dbReference>
<dbReference type="GO" id="GO:0019509">
    <property type="term" value="P:L-methionine salvage from methylthioadenosine"/>
    <property type="evidence" value="ECO:0007669"/>
    <property type="project" value="UniProtKB-UniRule"/>
</dbReference>
<dbReference type="GO" id="GO:0019284">
    <property type="term" value="P:L-methionine salvage from S-adenosylmethionine"/>
    <property type="evidence" value="ECO:0007669"/>
    <property type="project" value="TreeGrafter"/>
</dbReference>
<dbReference type="GO" id="GO:0046124">
    <property type="term" value="P:purine deoxyribonucleoside catabolic process"/>
    <property type="evidence" value="ECO:0007669"/>
    <property type="project" value="UniProtKB-UniRule"/>
</dbReference>
<dbReference type="CDD" id="cd09008">
    <property type="entry name" value="MTAN"/>
    <property type="match status" value="1"/>
</dbReference>
<dbReference type="FunFam" id="3.40.50.1580:FF:000001">
    <property type="entry name" value="MTA/SAH nucleosidase family protein"/>
    <property type="match status" value="1"/>
</dbReference>
<dbReference type="Gene3D" id="3.40.50.1580">
    <property type="entry name" value="Nucleoside phosphorylase domain"/>
    <property type="match status" value="1"/>
</dbReference>
<dbReference type="HAMAP" id="MF_01684">
    <property type="entry name" value="Salvage_MtnN"/>
    <property type="match status" value="1"/>
</dbReference>
<dbReference type="InterPro" id="IPR010049">
    <property type="entry name" value="MTA_SAH_Nsdase"/>
</dbReference>
<dbReference type="InterPro" id="IPR000845">
    <property type="entry name" value="Nucleoside_phosphorylase_d"/>
</dbReference>
<dbReference type="InterPro" id="IPR035994">
    <property type="entry name" value="Nucleoside_phosphorylase_sf"/>
</dbReference>
<dbReference type="NCBIfam" id="TIGR01704">
    <property type="entry name" value="MTA_SAH-Nsdase"/>
    <property type="match status" value="1"/>
</dbReference>
<dbReference type="NCBIfam" id="NF004079">
    <property type="entry name" value="PRK05584.1"/>
    <property type="match status" value="1"/>
</dbReference>
<dbReference type="PANTHER" id="PTHR46832">
    <property type="entry name" value="5'-METHYLTHIOADENOSINE/S-ADENOSYLHOMOCYSTEINE NUCLEOSIDASE"/>
    <property type="match status" value="1"/>
</dbReference>
<dbReference type="PANTHER" id="PTHR46832:SF1">
    <property type="entry name" value="5'-METHYLTHIOADENOSINE_S-ADENOSYLHOMOCYSTEINE NUCLEOSIDASE"/>
    <property type="match status" value="1"/>
</dbReference>
<dbReference type="Pfam" id="PF01048">
    <property type="entry name" value="PNP_UDP_1"/>
    <property type="match status" value="1"/>
</dbReference>
<dbReference type="SUPFAM" id="SSF53167">
    <property type="entry name" value="Purine and uridine phosphorylases"/>
    <property type="match status" value="1"/>
</dbReference>
<protein>
    <recommendedName>
        <fullName evidence="1">5'-methylthioadenosine/S-adenosylhomocysteine nucleosidase</fullName>
        <shortName evidence="1">MTA/SAH nucleosidase</shortName>
        <shortName evidence="1">MTAN</shortName>
        <ecNumber evidence="1">3.2.2.9</ecNumber>
    </recommendedName>
    <alternativeName>
        <fullName evidence="1">5'-deoxyadenosine nucleosidase</fullName>
        <shortName evidence="1">DOA nucleosidase</shortName>
        <shortName evidence="1">dAdo nucleosidase</shortName>
    </alternativeName>
    <alternativeName>
        <fullName evidence="1">5'-methylthioadenosine nucleosidase</fullName>
        <shortName evidence="1">MTA nucleosidase</shortName>
    </alternativeName>
    <alternativeName>
        <fullName evidence="1">S-adenosylhomocysteine nucleosidase</fullName>
        <shortName evidence="1">AdoHcy nucleosidase</shortName>
        <shortName evidence="1">SAH nucleosidase</shortName>
        <shortName evidence="1">SRH nucleosidase</shortName>
    </alternativeName>
</protein>
<keyword id="KW-0028">Amino-acid biosynthesis</keyword>
<keyword id="KW-0378">Hydrolase</keyword>
<keyword id="KW-0486">Methionine biosynthesis</keyword>
<gene>
    <name evidence="1" type="primary">mtnN</name>
    <name type="ordered locus">YpsIP31758_3325</name>
</gene>